<dbReference type="EC" id="7.1.2.2" evidence="1"/>
<dbReference type="EMBL" id="CP000361">
    <property type="protein sequence ID" value="ABV67845.1"/>
    <property type="molecule type" value="Genomic_DNA"/>
</dbReference>
<dbReference type="RefSeq" id="WP_004509829.1">
    <property type="nucleotide sequence ID" value="NC_009850.1"/>
</dbReference>
<dbReference type="SMR" id="A8EV72"/>
<dbReference type="STRING" id="367737.Abu_1597"/>
<dbReference type="GeneID" id="24304409"/>
<dbReference type="KEGG" id="abu:Abu_1597"/>
<dbReference type="eggNOG" id="COG0056">
    <property type="taxonomic scope" value="Bacteria"/>
</dbReference>
<dbReference type="HOGENOM" id="CLU_010091_2_1_7"/>
<dbReference type="Proteomes" id="UP000001136">
    <property type="component" value="Chromosome"/>
</dbReference>
<dbReference type="GO" id="GO:0005886">
    <property type="term" value="C:plasma membrane"/>
    <property type="evidence" value="ECO:0007669"/>
    <property type="project" value="UniProtKB-SubCell"/>
</dbReference>
<dbReference type="GO" id="GO:0045259">
    <property type="term" value="C:proton-transporting ATP synthase complex"/>
    <property type="evidence" value="ECO:0007669"/>
    <property type="project" value="UniProtKB-KW"/>
</dbReference>
<dbReference type="GO" id="GO:0043531">
    <property type="term" value="F:ADP binding"/>
    <property type="evidence" value="ECO:0007669"/>
    <property type="project" value="TreeGrafter"/>
</dbReference>
<dbReference type="GO" id="GO:0005524">
    <property type="term" value="F:ATP binding"/>
    <property type="evidence" value="ECO:0007669"/>
    <property type="project" value="UniProtKB-UniRule"/>
</dbReference>
<dbReference type="GO" id="GO:0046933">
    <property type="term" value="F:proton-transporting ATP synthase activity, rotational mechanism"/>
    <property type="evidence" value="ECO:0007669"/>
    <property type="project" value="UniProtKB-UniRule"/>
</dbReference>
<dbReference type="CDD" id="cd18113">
    <property type="entry name" value="ATP-synt_F1_alpha_C"/>
    <property type="match status" value="1"/>
</dbReference>
<dbReference type="CDD" id="cd18116">
    <property type="entry name" value="ATP-synt_F1_alpha_N"/>
    <property type="match status" value="1"/>
</dbReference>
<dbReference type="CDD" id="cd01132">
    <property type="entry name" value="F1-ATPase_alpha_CD"/>
    <property type="match status" value="1"/>
</dbReference>
<dbReference type="FunFam" id="1.20.150.20:FF:000001">
    <property type="entry name" value="ATP synthase subunit alpha"/>
    <property type="match status" value="1"/>
</dbReference>
<dbReference type="FunFam" id="2.40.30.20:FF:000001">
    <property type="entry name" value="ATP synthase subunit alpha"/>
    <property type="match status" value="1"/>
</dbReference>
<dbReference type="FunFam" id="3.40.50.300:FF:000002">
    <property type="entry name" value="ATP synthase subunit alpha"/>
    <property type="match status" value="1"/>
</dbReference>
<dbReference type="Gene3D" id="2.40.30.20">
    <property type="match status" value="1"/>
</dbReference>
<dbReference type="Gene3D" id="1.20.150.20">
    <property type="entry name" value="ATP synthase alpha/beta chain, C-terminal domain"/>
    <property type="match status" value="1"/>
</dbReference>
<dbReference type="Gene3D" id="3.40.50.300">
    <property type="entry name" value="P-loop containing nucleotide triphosphate hydrolases"/>
    <property type="match status" value="1"/>
</dbReference>
<dbReference type="HAMAP" id="MF_01346">
    <property type="entry name" value="ATP_synth_alpha_bact"/>
    <property type="match status" value="1"/>
</dbReference>
<dbReference type="InterPro" id="IPR023366">
    <property type="entry name" value="ATP_synth_asu-like_sf"/>
</dbReference>
<dbReference type="InterPro" id="IPR000793">
    <property type="entry name" value="ATP_synth_asu_C"/>
</dbReference>
<dbReference type="InterPro" id="IPR038376">
    <property type="entry name" value="ATP_synth_asu_C_sf"/>
</dbReference>
<dbReference type="InterPro" id="IPR033732">
    <property type="entry name" value="ATP_synth_F1_a_nt-bd_dom"/>
</dbReference>
<dbReference type="InterPro" id="IPR005294">
    <property type="entry name" value="ATP_synth_F1_asu"/>
</dbReference>
<dbReference type="InterPro" id="IPR020003">
    <property type="entry name" value="ATPase_a/bsu_AS"/>
</dbReference>
<dbReference type="InterPro" id="IPR004100">
    <property type="entry name" value="ATPase_F1/V1/A1_a/bsu_N"/>
</dbReference>
<dbReference type="InterPro" id="IPR036121">
    <property type="entry name" value="ATPase_F1/V1/A1_a/bsu_N_sf"/>
</dbReference>
<dbReference type="InterPro" id="IPR000194">
    <property type="entry name" value="ATPase_F1/V1/A1_a/bsu_nucl-bd"/>
</dbReference>
<dbReference type="InterPro" id="IPR027417">
    <property type="entry name" value="P-loop_NTPase"/>
</dbReference>
<dbReference type="NCBIfam" id="TIGR00962">
    <property type="entry name" value="atpA"/>
    <property type="match status" value="1"/>
</dbReference>
<dbReference type="NCBIfam" id="NF009884">
    <property type="entry name" value="PRK13343.1"/>
    <property type="match status" value="1"/>
</dbReference>
<dbReference type="PANTHER" id="PTHR48082">
    <property type="entry name" value="ATP SYNTHASE SUBUNIT ALPHA, MITOCHONDRIAL"/>
    <property type="match status" value="1"/>
</dbReference>
<dbReference type="PANTHER" id="PTHR48082:SF2">
    <property type="entry name" value="ATP SYNTHASE SUBUNIT ALPHA, MITOCHONDRIAL"/>
    <property type="match status" value="1"/>
</dbReference>
<dbReference type="Pfam" id="PF00006">
    <property type="entry name" value="ATP-synt_ab"/>
    <property type="match status" value="1"/>
</dbReference>
<dbReference type="Pfam" id="PF00306">
    <property type="entry name" value="ATP-synt_ab_C"/>
    <property type="match status" value="1"/>
</dbReference>
<dbReference type="Pfam" id="PF02874">
    <property type="entry name" value="ATP-synt_ab_N"/>
    <property type="match status" value="1"/>
</dbReference>
<dbReference type="PIRSF" id="PIRSF039088">
    <property type="entry name" value="F_ATPase_subunit_alpha"/>
    <property type="match status" value="1"/>
</dbReference>
<dbReference type="SUPFAM" id="SSF47917">
    <property type="entry name" value="C-terminal domain of alpha and beta subunits of F1 ATP synthase"/>
    <property type="match status" value="1"/>
</dbReference>
<dbReference type="SUPFAM" id="SSF50615">
    <property type="entry name" value="N-terminal domain of alpha and beta subunits of F1 ATP synthase"/>
    <property type="match status" value="1"/>
</dbReference>
<dbReference type="SUPFAM" id="SSF52540">
    <property type="entry name" value="P-loop containing nucleoside triphosphate hydrolases"/>
    <property type="match status" value="1"/>
</dbReference>
<dbReference type="PROSITE" id="PS00152">
    <property type="entry name" value="ATPASE_ALPHA_BETA"/>
    <property type="match status" value="1"/>
</dbReference>
<gene>
    <name evidence="1" type="primary">atpA</name>
    <name type="ordered locus">Abu_1597</name>
</gene>
<sequence length="505" mass="54624">MGAKIQADEISSIIKERIDNFELNVDVNETGKIISYADGIAQVYGLKNVMAGEIVEFENGEKGLASNLEESSVGVVILGKGEGLREGTSCKRVGKLLETPVGEALVGRVVNALGEPIDGKGAIAATETRFVEEKAPGIMARKSVHEPLQTGIKAIDALVPIGRGQRELIIGDRQTGKTTVAIDTILNQKGENVICIYVAIGQKSSSIASVVRTLEESGAMDYTIVVNASAADSSALQFLAPYTGVTIGEYFRDNGKHALIIYDDLSKHAVAYREMSLILRRPPGREAYPGDVFYLHSRLLERAAKMSDERGAGSMTALPIIETQAGDVAAYIPTNVISITDGQIFLETNLFNSGIRPAINVGLSVSRVGGAAQIKATKQVAGTLKLSLAQYRELEAFAQFASDLDEATRRELELGQRMVEVLKQGVNKPLVIEKQIVIIYAGTKGYLNDIAVKDVVRFEAELHAFFEQKYSNILEAIKASQKIDDNTETQLKAALEEFKTVFNAN</sequence>
<reference key="1">
    <citation type="journal article" date="2007" name="PLoS ONE">
        <title>The complete genome sequence and analysis of the Epsilonproteobacterium Arcobacter butzleri.</title>
        <authorList>
            <person name="Miller W.G."/>
            <person name="Parker C.T."/>
            <person name="Rubenfield M."/>
            <person name="Mendz G.L."/>
            <person name="Woesten M.M.S.M."/>
            <person name="Ussery D.W."/>
            <person name="Stolz J.F."/>
            <person name="Binnewies T.T."/>
            <person name="Hallin P.F."/>
            <person name="Wang G."/>
            <person name="Malek J.A."/>
            <person name="Rogosin A."/>
            <person name="Stanker L.H."/>
            <person name="Mandrell R.E."/>
        </authorList>
    </citation>
    <scope>NUCLEOTIDE SEQUENCE [LARGE SCALE GENOMIC DNA]</scope>
    <source>
        <strain>RM4018</strain>
    </source>
</reference>
<protein>
    <recommendedName>
        <fullName evidence="1">ATP synthase subunit alpha</fullName>
        <ecNumber evidence="1">7.1.2.2</ecNumber>
    </recommendedName>
    <alternativeName>
        <fullName evidence="1">ATP synthase F1 sector subunit alpha</fullName>
    </alternativeName>
    <alternativeName>
        <fullName evidence="1">F-ATPase subunit alpha</fullName>
    </alternativeName>
</protein>
<evidence type="ECO:0000255" key="1">
    <source>
        <dbReference type="HAMAP-Rule" id="MF_01346"/>
    </source>
</evidence>
<accession>A8EV72</accession>
<name>ATPA_ALIB4</name>
<proteinExistence type="inferred from homology"/>
<comment type="function">
    <text evidence="1">Produces ATP from ADP in the presence of a proton gradient across the membrane. The alpha chain is a regulatory subunit.</text>
</comment>
<comment type="catalytic activity">
    <reaction evidence="1">
        <text>ATP + H2O + 4 H(+)(in) = ADP + phosphate + 5 H(+)(out)</text>
        <dbReference type="Rhea" id="RHEA:57720"/>
        <dbReference type="ChEBI" id="CHEBI:15377"/>
        <dbReference type="ChEBI" id="CHEBI:15378"/>
        <dbReference type="ChEBI" id="CHEBI:30616"/>
        <dbReference type="ChEBI" id="CHEBI:43474"/>
        <dbReference type="ChEBI" id="CHEBI:456216"/>
        <dbReference type="EC" id="7.1.2.2"/>
    </reaction>
</comment>
<comment type="subunit">
    <text evidence="1">F-type ATPases have 2 components, CF(1) - the catalytic core - and CF(0) - the membrane proton channel. CF(1) has five subunits: alpha(3), beta(3), gamma(1), delta(1), epsilon(1). CF(0) has three main subunits: a(1), b(2) and c(9-12). The alpha and beta chains form an alternating ring which encloses part of the gamma chain. CF(1) is attached to CF(0) by a central stalk formed by the gamma and epsilon chains, while a peripheral stalk is formed by the delta and b chains.</text>
</comment>
<comment type="subcellular location">
    <subcellularLocation>
        <location evidence="1">Cell inner membrane</location>
        <topology evidence="1">Peripheral membrane protein</topology>
    </subcellularLocation>
</comment>
<comment type="similarity">
    <text evidence="1">Belongs to the ATPase alpha/beta chains family.</text>
</comment>
<keyword id="KW-0066">ATP synthesis</keyword>
<keyword id="KW-0067">ATP-binding</keyword>
<keyword id="KW-0997">Cell inner membrane</keyword>
<keyword id="KW-1003">Cell membrane</keyword>
<keyword id="KW-0139">CF(1)</keyword>
<keyword id="KW-0375">Hydrogen ion transport</keyword>
<keyword id="KW-0406">Ion transport</keyword>
<keyword id="KW-0472">Membrane</keyword>
<keyword id="KW-0547">Nucleotide-binding</keyword>
<keyword id="KW-1185">Reference proteome</keyword>
<keyword id="KW-1278">Translocase</keyword>
<keyword id="KW-0813">Transport</keyword>
<organism>
    <name type="scientific">Aliarcobacter butzleri (strain RM4018)</name>
    <name type="common">Arcobacter butzleri</name>
    <dbReference type="NCBI Taxonomy" id="367737"/>
    <lineage>
        <taxon>Bacteria</taxon>
        <taxon>Pseudomonadati</taxon>
        <taxon>Campylobacterota</taxon>
        <taxon>Epsilonproteobacteria</taxon>
        <taxon>Campylobacterales</taxon>
        <taxon>Arcobacteraceae</taxon>
        <taxon>Aliarcobacter</taxon>
    </lineage>
</organism>
<feature type="chain" id="PRO_1000067709" description="ATP synthase subunit alpha">
    <location>
        <begin position="1"/>
        <end position="505"/>
    </location>
</feature>
<feature type="binding site" evidence="1">
    <location>
        <begin position="171"/>
        <end position="178"/>
    </location>
    <ligand>
        <name>ATP</name>
        <dbReference type="ChEBI" id="CHEBI:30616"/>
    </ligand>
</feature>
<feature type="site" description="Required for activity" evidence="1">
    <location>
        <position position="364"/>
    </location>
</feature>